<protein>
    <recommendedName>
        <fullName evidence="1">Undecaprenyl-diphosphatase</fullName>
        <ecNumber evidence="1">3.6.1.27</ecNumber>
    </recommendedName>
    <alternativeName>
        <fullName evidence="1">Bacitracin resistance protein</fullName>
    </alternativeName>
    <alternativeName>
        <fullName evidence="1">Undecaprenyl pyrophosphate phosphatase</fullName>
    </alternativeName>
</protein>
<reference key="1">
    <citation type="journal article" date="2010" name="J. Bacteriol.">
        <title>Genome sequence of the deep-rooted Yersinia pestis strain Angola reveals new insights into the evolution and pangenome of the plague bacterium.</title>
        <authorList>
            <person name="Eppinger M."/>
            <person name="Worsham P.L."/>
            <person name="Nikolich M.P."/>
            <person name="Riley D.R."/>
            <person name="Sebastian Y."/>
            <person name="Mou S."/>
            <person name="Achtman M."/>
            <person name="Lindler L.E."/>
            <person name="Ravel J."/>
        </authorList>
    </citation>
    <scope>NUCLEOTIDE SEQUENCE [LARGE SCALE GENOMIC DNA]</scope>
    <source>
        <strain>Angola</strain>
    </source>
</reference>
<evidence type="ECO:0000255" key="1">
    <source>
        <dbReference type="HAMAP-Rule" id="MF_01006"/>
    </source>
</evidence>
<gene>
    <name evidence="1" type="primary">uppP</name>
    <name type="ordered locus">YpAngola_A0297</name>
</gene>
<proteinExistence type="inferred from homology"/>
<comment type="function">
    <text evidence="1">Catalyzes the dephosphorylation of undecaprenyl diphosphate (UPP). Confers resistance to bacitracin.</text>
</comment>
<comment type="catalytic activity">
    <reaction evidence="1">
        <text>di-trans,octa-cis-undecaprenyl diphosphate + H2O = di-trans,octa-cis-undecaprenyl phosphate + phosphate + H(+)</text>
        <dbReference type="Rhea" id="RHEA:28094"/>
        <dbReference type="ChEBI" id="CHEBI:15377"/>
        <dbReference type="ChEBI" id="CHEBI:15378"/>
        <dbReference type="ChEBI" id="CHEBI:43474"/>
        <dbReference type="ChEBI" id="CHEBI:58405"/>
        <dbReference type="ChEBI" id="CHEBI:60392"/>
        <dbReference type="EC" id="3.6.1.27"/>
    </reaction>
</comment>
<comment type="subcellular location">
    <subcellularLocation>
        <location evidence="1">Cell inner membrane</location>
        <topology evidence="1">Multi-pass membrane protein</topology>
    </subcellularLocation>
</comment>
<comment type="miscellaneous">
    <text>Bacitracin is thought to be involved in the inhibition of peptidoglycan synthesis by sequestering undecaprenyl diphosphate, thereby reducing the pool of lipid carrier available.</text>
</comment>
<comment type="similarity">
    <text evidence="1">Belongs to the UppP family.</text>
</comment>
<feature type="chain" id="PRO_1000197421" description="Undecaprenyl-diphosphatase">
    <location>
        <begin position="1"/>
        <end position="272"/>
    </location>
</feature>
<feature type="transmembrane region" description="Helical" evidence="1">
    <location>
        <begin position="5"/>
        <end position="25"/>
    </location>
</feature>
<feature type="transmembrane region" description="Helical" evidence="1">
    <location>
        <begin position="45"/>
        <end position="65"/>
    </location>
</feature>
<feature type="transmembrane region" description="Helical" evidence="1">
    <location>
        <begin position="88"/>
        <end position="108"/>
    </location>
</feature>
<feature type="transmembrane region" description="Helical" evidence="1">
    <location>
        <begin position="114"/>
        <end position="134"/>
    </location>
</feature>
<feature type="transmembrane region" description="Helical" evidence="1">
    <location>
        <begin position="153"/>
        <end position="172"/>
    </location>
</feature>
<feature type="transmembrane region" description="Helical" evidence="1">
    <location>
        <begin position="189"/>
        <end position="209"/>
    </location>
</feature>
<feature type="transmembrane region" description="Helical" evidence="1">
    <location>
        <begin position="221"/>
        <end position="241"/>
    </location>
</feature>
<feature type="transmembrane region" description="Helical" evidence="1">
    <location>
        <begin position="251"/>
        <end position="271"/>
    </location>
</feature>
<accession>A9R7E0</accession>
<sequence>MTDMYSLFVAFILGVVEGLTEFLPVSSTGHMIIVGELLGFTGDKAKTFEVIIQLGSILAVVVVFWRRLFGLIGIHFGAVPHEGKTNGHLTLGHILLAMIPAVILGLAFHDVIKALFDPKSVMYALVAGGVLLLAAEWLKPKNPKAVGLDDITYRQAFAIGCFQCLALWPGFSRSGATISGGMLVGVNRYAASEFSFILAVPMMIGASGLDLYKSLHFLTLGDLPMFAVGFITAFIVALIAIKTFLSLIKRISFVPFAIYRFIVAAVVYWVFM</sequence>
<name>UPPP_YERPG</name>
<dbReference type="EC" id="3.6.1.27" evidence="1"/>
<dbReference type="EMBL" id="CP000901">
    <property type="protein sequence ID" value="ABX86901.1"/>
    <property type="molecule type" value="Genomic_DNA"/>
</dbReference>
<dbReference type="SMR" id="A9R7E0"/>
<dbReference type="KEGG" id="ypg:YpAngola_A0297"/>
<dbReference type="PATRIC" id="fig|349746.12.peg.1246"/>
<dbReference type="GO" id="GO:0005886">
    <property type="term" value="C:plasma membrane"/>
    <property type="evidence" value="ECO:0007669"/>
    <property type="project" value="UniProtKB-SubCell"/>
</dbReference>
<dbReference type="GO" id="GO:0050380">
    <property type="term" value="F:undecaprenyl-diphosphatase activity"/>
    <property type="evidence" value="ECO:0007669"/>
    <property type="project" value="UniProtKB-UniRule"/>
</dbReference>
<dbReference type="GO" id="GO:0071555">
    <property type="term" value="P:cell wall organization"/>
    <property type="evidence" value="ECO:0007669"/>
    <property type="project" value="UniProtKB-KW"/>
</dbReference>
<dbReference type="GO" id="GO:0009252">
    <property type="term" value="P:peptidoglycan biosynthetic process"/>
    <property type="evidence" value="ECO:0007669"/>
    <property type="project" value="UniProtKB-KW"/>
</dbReference>
<dbReference type="GO" id="GO:0008360">
    <property type="term" value="P:regulation of cell shape"/>
    <property type="evidence" value="ECO:0007669"/>
    <property type="project" value="UniProtKB-KW"/>
</dbReference>
<dbReference type="GO" id="GO:0046677">
    <property type="term" value="P:response to antibiotic"/>
    <property type="evidence" value="ECO:0007669"/>
    <property type="project" value="UniProtKB-UniRule"/>
</dbReference>
<dbReference type="HAMAP" id="MF_01006">
    <property type="entry name" value="Undec_diphosphatase"/>
    <property type="match status" value="1"/>
</dbReference>
<dbReference type="InterPro" id="IPR003824">
    <property type="entry name" value="UppP"/>
</dbReference>
<dbReference type="NCBIfam" id="NF001388">
    <property type="entry name" value="PRK00281.1-1"/>
    <property type="match status" value="1"/>
</dbReference>
<dbReference type="NCBIfam" id="NF001389">
    <property type="entry name" value="PRK00281.1-2"/>
    <property type="match status" value="1"/>
</dbReference>
<dbReference type="NCBIfam" id="NF001390">
    <property type="entry name" value="PRK00281.1-4"/>
    <property type="match status" value="1"/>
</dbReference>
<dbReference type="NCBIfam" id="TIGR00753">
    <property type="entry name" value="undec_PP_bacA"/>
    <property type="match status" value="1"/>
</dbReference>
<dbReference type="PANTHER" id="PTHR30622">
    <property type="entry name" value="UNDECAPRENYL-DIPHOSPHATASE"/>
    <property type="match status" value="1"/>
</dbReference>
<dbReference type="PANTHER" id="PTHR30622:SF3">
    <property type="entry name" value="UNDECAPRENYL-DIPHOSPHATASE"/>
    <property type="match status" value="1"/>
</dbReference>
<dbReference type="Pfam" id="PF02673">
    <property type="entry name" value="BacA"/>
    <property type="match status" value="1"/>
</dbReference>
<organism>
    <name type="scientific">Yersinia pestis bv. Antiqua (strain Angola)</name>
    <dbReference type="NCBI Taxonomy" id="349746"/>
    <lineage>
        <taxon>Bacteria</taxon>
        <taxon>Pseudomonadati</taxon>
        <taxon>Pseudomonadota</taxon>
        <taxon>Gammaproteobacteria</taxon>
        <taxon>Enterobacterales</taxon>
        <taxon>Yersiniaceae</taxon>
        <taxon>Yersinia</taxon>
    </lineage>
</organism>
<keyword id="KW-0046">Antibiotic resistance</keyword>
<keyword id="KW-0997">Cell inner membrane</keyword>
<keyword id="KW-1003">Cell membrane</keyword>
<keyword id="KW-0133">Cell shape</keyword>
<keyword id="KW-0961">Cell wall biogenesis/degradation</keyword>
<keyword id="KW-0378">Hydrolase</keyword>
<keyword id="KW-0472">Membrane</keyword>
<keyword id="KW-0573">Peptidoglycan synthesis</keyword>
<keyword id="KW-0812">Transmembrane</keyword>
<keyword id="KW-1133">Transmembrane helix</keyword>